<reference key="1">
    <citation type="journal article" date="2006" name="Proc. Natl. Acad. Sci. U.S.A.">
        <title>Identification of genes subject to positive selection in uropathogenic strains of Escherichia coli: a comparative genomics approach.</title>
        <authorList>
            <person name="Chen S.L."/>
            <person name="Hung C.-S."/>
            <person name="Xu J."/>
            <person name="Reigstad C.S."/>
            <person name="Magrini V."/>
            <person name="Sabo A."/>
            <person name="Blasiar D."/>
            <person name="Bieri T."/>
            <person name="Meyer R.R."/>
            <person name="Ozersky P."/>
            <person name="Armstrong J.R."/>
            <person name="Fulton R.S."/>
            <person name="Latreille J.P."/>
            <person name="Spieth J."/>
            <person name="Hooton T.M."/>
            <person name="Mardis E.R."/>
            <person name="Hultgren S.J."/>
            <person name="Gordon J.I."/>
        </authorList>
    </citation>
    <scope>NUCLEOTIDE SEQUENCE [LARGE SCALE GENOMIC DNA]</scope>
    <source>
        <strain>UTI89 / UPEC</strain>
    </source>
</reference>
<organism>
    <name type="scientific">Escherichia coli (strain UTI89 / UPEC)</name>
    <dbReference type="NCBI Taxonomy" id="364106"/>
    <lineage>
        <taxon>Bacteria</taxon>
        <taxon>Pseudomonadati</taxon>
        <taxon>Pseudomonadota</taxon>
        <taxon>Gammaproteobacteria</taxon>
        <taxon>Enterobacterales</taxon>
        <taxon>Enterobacteriaceae</taxon>
        <taxon>Escherichia</taxon>
    </lineage>
</organism>
<evidence type="ECO:0000255" key="1">
    <source>
        <dbReference type="HAMAP-Rule" id="MF_00168"/>
    </source>
</evidence>
<protein>
    <recommendedName>
        <fullName evidence="1">Queuine tRNA-ribosyltransferase</fullName>
        <ecNumber evidence="1">2.4.2.29</ecNumber>
    </recommendedName>
    <alternativeName>
        <fullName evidence="1">Guanine insertion enzyme</fullName>
    </alternativeName>
    <alternativeName>
        <fullName evidence="1">tRNA-guanine transglycosylase</fullName>
    </alternativeName>
</protein>
<accession>Q1RFD5</accession>
<comment type="function">
    <text evidence="1">Catalyzes the base-exchange of a guanine (G) residue with the queuine precursor 7-aminomethyl-7-deazaguanine (PreQ1) at position 34 (anticodon wobble position) in tRNAs with GU(N) anticodons (tRNA-Asp, -Asn, -His and -Tyr). Catalysis occurs through a double-displacement mechanism. The nucleophile active site attacks the C1' of nucleotide 34 to detach the guanine base from the RNA, forming a covalent enzyme-RNA intermediate. The proton acceptor active site deprotonates the incoming PreQ1, allowing a nucleophilic attack on the C1' of the ribose to form the product. After dissociation, two additional enzymatic reactions on the tRNA convert PreQ1 to queuine (Q), resulting in the hypermodified nucleoside queuosine (7-(((4,5-cis-dihydroxy-2-cyclopenten-1-yl)amino)methyl)-7-deazaguanosine).</text>
</comment>
<comment type="catalytic activity">
    <reaction evidence="1">
        <text>7-aminomethyl-7-carbaguanine + guanosine(34) in tRNA = 7-aminomethyl-7-carbaguanosine(34) in tRNA + guanine</text>
        <dbReference type="Rhea" id="RHEA:24104"/>
        <dbReference type="Rhea" id="RHEA-COMP:10341"/>
        <dbReference type="Rhea" id="RHEA-COMP:10342"/>
        <dbReference type="ChEBI" id="CHEBI:16235"/>
        <dbReference type="ChEBI" id="CHEBI:58703"/>
        <dbReference type="ChEBI" id="CHEBI:74269"/>
        <dbReference type="ChEBI" id="CHEBI:82833"/>
        <dbReference type="EC" id="2.4.2.29"/>
    </reaction>
</comment>
<comment type="cofactor">
    <cofactor evidence="1">
        <name>Zn(2+)</name>
        <dbReference type="ChEBI" id="CHEBI:29105"/>
    </cofactor>
    <text evidence="1">Binds 1 zinc ion per subunit.</text>
</comment>
<comment type="pathway">
    <text evidence="1">tRNA modification; tRNA-queuosine biosynthesis.</text>
</comment>
<comment type="subunit">
    <text evidence="1">Homodimer. Within each dimer, one monomer is responsible for RNA recognition and catalysis, while the other monomer binds to the replacement base PreQ1.</text>
</comment>
<comment type="similarity">
    <text evidence="1">Belongs to the queuine tRNA-ribosyltransferase family.</text>
</comment>
<gene>
    <name evidence="1" type="primary">tgt</name>
    <name type="ordered locus">UTI89_C0428</name>
</gene>
<feature type="chain" id="PRO_1000016789" description="Queuine tRNA-ribosyltransferase">
    <location>
        <begin position="1"/>
        <end position="375"/>
    </location>
</feature>
<feature type="region of interest" description="RNA binding" evidence="1">
    <location>
        <begin position="245"/>
        <end position="251"/>
    </location>
</feature>
<feature type="region of interest" description="RNA binding; important for wobble base 34 recognition" evidence="1">
    <location>
        <begin position="269"/>
        <end position="273"/>
    </location>
</feature>
<feature type="active site" description="Proton acceptor" evidence="1">
    <location>
        <position position="89"/>
    </location>
</feature>
<feature type="active site" description="Nucleophile" evidence="1">
    <location>
        <position position="264"/>
    </location>
</feature>
<feature type="binding site" evidence="1">
    <location>
        <begin position="89"/>
        <end position="93"/>
    </location>
    <ligand>
        <name>substrate</name>
    </ligand>
</feature>
<feature type="binding site" evidence="1">
    <location>
        <position position="143"/>
    </location>
    <ligand>
        <name>substrate</name>
    </ligand>
</feature>
<feature type="binding site" evidence="1">
    <location>
        <position position="187"/>
    </location>
    <ligand>
        <name>substrate</name>
    </ligand>
</feature>
<feature type="binding site" evidence="1">
    <location>
        <position position="214"/>
    </location>
    <ligand>
        <name>substrate</name>
    </ligand>
</feature>
<feature type="binding site" evidence="1">
    <location>
        <position position="302"/>
    </location>
    <ligand>
        <name>Zn(2+)</name>
        <dbReference type="ChEBI" id="CHEBI:29105"/>
    </ligand>
</feature>
<feature type="binding site" evidence="1">
    <location>
        <position position="304"/>
    </location>
    <ligand>
        <name>Zn(2+)</name>
        <dbReference type="ChEBI" id="CHEBI:29105"/>
    </ligand>
</feature>
<feature type="binding site" evidence="1">
    <location>
        <position position="307"/>
    </location>
    <ligand>
        <name>Zn(2+)</name>
        <dbReference type="ChEBI" id="CHEBI:29105"/>
    </ligand>
</feature>
<feature type="binding site" evidence="1">
    <location>
        <position position="333"/>
    </location>
    <ligand>
        <name>Zn(2+)</name>
        <dbReference type="ChEBI" id="CHEBI:29105"/>
    </ligand>
</feature>
<dbReference type="EC" id="2.4.2.29" evidence="1"/>
<dbReference type="EMBL" id="CP000243">
    <property type="protein sequence ID" value="ABE05929.1"/>
    <property type="molecule type" value="Genomic_DNA"/>
</dbReference>
<dbReference type="RefSeq" id="WP_000667319.1">
    <property type="nucleotide sequence ID" value="NZ_CP064825.1"/>
</dbReference>
<dbReference type="SMR" id="Q1RFD5"/>
<dbReference type="GeneID" id="93777054"/>
<dbReference type="KEGG" id="eci:UTI89_C0428"/>
<dbReference type="HOGENOM" id="CLU_022060_0_1_6"/>
<dbReference type="UniPathway" id="UPA00392"/>
<dbReference type="Proteomes" id="UP000001952">
    <property type="component" value="Chromosome"/>
</dbReference>
<dbReference type="GO" id="GO:0005829">
    <property type="term" value="C:cytosol"/>
    <property type="evidence" value="ECO:0007669"/>
    <property type="project" value="TreeGrafter"/>
</dbReference>
<dbReference type="GO" id="GO:0046872">
    <property type="term" value="F:metal ion binding"/>
    <property type="evidence" value="ECO:0007669"/>
    <property type="project" value="UniProtKB-KW"/>
</dbReference>
<dbReference type="GO" id="GO:0008479">
    <property type="term" value="F:tRNA-guanosine(34) queuine transglycosylase activity"/>
    <property type="evidence" value="ECO:0007669"/>
    <property type="project" value="UniProtKB-UniRule"/>
</dbReference>
<dbReference type="GO" id="GO:0008616">
    <property type="term" value="P:queuosine biosynthetic process"/>
    <property type="evidence" value="ECO:0007669"/>
    <property type="project" value="UniProtKB-UniRule"/>
</dbReference>
<dbReference type="GO" id="GO:0002099">
    <property type="term" value="P:tRNA wobble guanine modification"/>
    <property type="evidence" value="ECO:0007669"/>
    <property type="project" value="TreeGrafter"/>
</dbReference>
<dbReference type="GO" id="GO:0101030">
    <property type="term" value="P:tRNA-guanine transglycosylation"/>
    <property type="evidence" value="ECO:0007669"/>
    <property type="project" value="InterPro"/>
</dbReference>
<dbReference type="FunFam" id="3.20.20.105:FF:000001">
    <property type="entry name" value="Queuine tRNA-ribosyltransferase"/>
    <property type="match status" value="1"/>
</dbReference>
<dbReference type="Gene3D" id="3.20.20.105">
    <property type="entry name" value="Queuine tRNA-ribosyltransferase-like"/>
    <property type="match status" value="1"/>
</dbReference>
<dbReference type="HAMAP" id="MF_00168">
    <property type="entry name" value="Q_tRNA_Tgt"/>
    <property type="match status" value="1"/>
</dbReference>
<dbReference type="InterPro" id="IPR050076">
    <property type="entry name" value="ArchSynthase1/Queuine_TRR"/>
</dbReference>
<dbReference type="InterPro" id="IPR004803">
    <property type="entry name" value="TGT"/>
</dbReference>
<dbReference type="InterPro" id="IPR036511">
    <property type="entry name" value="TGT-like_sf"/>
</dbReference>
<dbReference type="InterPro" id="IPR002616">
    <property type="entry name" value="tRNA_ribo_trans-like"/>
</dbReference>
<dbReference type="NCBIfam" id="TIGR00430">
    <property type="entry name" value="Q_tRNA_tgt"/>
    <property type="match status" value="1"/>
</dbReference>
<dbReference type="NCBIfam" id="TIGR00449">
    <property type="entry name" value="tgt_general"/>
    <property type="match status" value="1"/>
</dbReference>
<dbReference type="PANTHER" id="PTHR46499">
    <property type="entry name" value="QUEUINE TRNA-RIBOSYLTRANSFERASE"/>
    <property type="match status" value="1"/>
</dbReference>
<dbReference type="PANTHER" id="PTHR46499:SF1">
    <property type="entry name" value="QUEUINE TRNA-RIBOSYLTRANSFERASE"/>
    <property type="match status" value="1"/>
</dbReference>
<dbReference type="Pfam" id="PF01702">
    <property type="entry name" value="TGT"/>
    <property type="match status" value="1"/>
</dbReference>
<dbReference type="SUPFAM" id="SSF51713">
    <property type="entry name" value="tRNA-guanine transglycosylase"/>
    <property type="match status" value="1"/>
</dbReference>
<keyword id="KW-0328">Glycosyltransferase</keyword>
<keyword id="KW-0479">Metal-binding</keyword>
<keyword id="KW-0671">Queuosine biosynthesis</keyword>
<keyword id="KW-0808">Transferase</keyword>
<keyword id="KW-0819">tRNA processing</keyword>
<keyword id="KW-0862">Zinc</keyword>
<name>TGT_ECOUT</name>
<proteinExistence type="inferred from homology"/>
<sequence length="375" mass="42594">MKFELDTTDGRARRGRLVFDRGVVETPCFMPVGTYGTVKGMTPEEVEATGAQIILGNTFHLWLRPGQEIMKLHGDLHDFMQWKGPILTDSGGFQVFSLGDIRKITEQGVHFRNPINGDPIFLDPEKSMEIQYDLGSDIVMIFDECTPYPADWDYAKRSMEMSLRWAKRSRERFDSLGNKNALFGIIQGSVYEDLRDISVKGLVDIGFDGYAVGGLAVGEPKADMHRILEHVCPQIPADKPRYLMGVGKPEDLVEGVRRGIDMFDCVMPTRNARNGHLFVTDGVVKIRNAKYKSDTGPLDPECDCYTCRNYSRAYLHHLDRCNEILGARLNTIHNLRYYQRLMAGLRKAIEEGKLESFVTDFYQRQGREVPPLNVD</sequence>